<evidence type="ECO:0000255" key="1">
    <source>
        <dbReference type="HAMAP-Rule" id="MF_00358"/>
    </source>
</evidence>
<evidence type="ECO:0000256" key="2">
    <source>
        <dbReference type="SAM" id="MobiDB-lite"/>
    </source>
</evidence>
<evidence type="ECO:0000305" key="3"/>
<protein>
    <recommendedName>
        <fullName evidence="1">Small ribosomal subunit protein bS21</fullName>
    </recommendedName>
    <alternativeName>
        <fullName evidence="3">30S ribosomal protein S21</fullName>
    </alternativeName>
</protein>
<organism>
    <name type="scientific">Ruminiclostridium cellulolyticum (strain ATCC 35319 / DSM 5812 / JCM 6584 / H10)</name>
    <name type="common">Clostridium cellulolyticum</name>
    <dbReference type="NCBI Taxonomy" id="394503"/>
    <lineage>
        <taxon>Bacteria</taxon>
        <taxon>Bacillati</taxon>
        <taxon>Bacillota</taxon>
        <taxon>Clostridia</taxon>
        <taxon>Eubacteriales</taxon>
        <taxon>Oscillospiraceae</taxon>
        <taxon>Ruminiclostridium</taxon>
    </lineage>
</organism>
<gene>
    <name evidence="1" type="primary">rpsU</name>
    <name type="ordered locus">Ccel_2094</name>
</gene>
<reference key="1">
    <citation type="submission" date="2009-01" db="EMBL/GenBank/DDBJ databases">
        <title>Complete sequence of Clostridium cellulolyticum H10.</title>
        <authorList>
            <consortium name="US DOE Joint Genome Institute"/>
            <person name="Lucas S."/>
            <person name="Copeland A."/>
            <person name="Lapidus A."/>
            <person name="Glavina del Rio T."/>
            <person name="Dalin E."/>
            <person name="Tice H."/>
            <person name="Bruce D."/>
            <person name="Goodwin L."/>
            <person name="Pitluck S."/>
            <person name="Chertkov O."/>
            <person name="Saunders E."/>
            <person name="Brettin T."/>
            <person name="Detter J.C."/>
            <person name="Han C."/>
            <person name="Larimer F."/>
            <person name="Land M."/>
            <person name="Hauser L."/>
            <person name="Kyrpides N."/>
            <person name="Ivanova N."/>
            <person name="Zhou J."/>
            <person name="Richardson P."/>
        </authorList>
    </citation>
    <scope>NUCLEOTIDE SEQUENCE [LARGE SCALE GENOMIC DNA]</scope>
    <source>
        <strain>ATCC 35319 / DSM 5812 / JCM 6584 / H10</strain>
    </source>
</reference>
<name>RS21_RUMCH</name>
<feature type="chain" id="PRO_1000194286" description="Small ribosomal subunit protein bS21">
    <location>
        <begin position="1"/>
        <end position="58"/>
    </location>
</feature>
<feature type="region of interest" description="Disordered" evidence="2">
    <location>
        <begin position="35"/>
        <end position="58"/>
    </location>
</feature>
<feature type="compositionally biased region" description="Basic residues" evidence="2">
    <location>
        <begin position="43"/>
        <end position="58"/>
    </location>
</feature>
<proteinExistence type="inferred from homology"/>
<comment type="similarity">
    <text evidence="1">Belongs to the bacterial ribosomal protein bS21 family.</text>
</comment>
<keyword id="KW-1185">Reference proteome</keyword>
<keyword id="KW-0687">Ribonucleoprotein</keyword>
<keyword id="KW-0689">Ribosomal protein</keyword>
<dbReference type="EMBL" id="CP001348">
    <property type="protein sequence ID" value="ACL76439.1"/>
    <property type="molecule type" value="Genomic_DNA"/>
</dbReference>
<dbReference type="RefSeq" id="WP_004622093.1">
    <property type="nucleotide sequence ID" value="NC_011898.1"/>
</dbReference>
<dbReference type="SMR" id="B8I406"/>
<dbReference type="STRING" id="394503.Ccel_2094"/>
<dbReference type="KEGG" id="cce:Ccel_2094"/>
<dbReference type="eggNOG" id="COG0828">
    <property type="taxonomic scope" value="Bacteria"/>
</dbReference>
<dbReference type="HOGENOM" id="CLU_159258_1_2_9"/>
<dbReference type="OrthoDB" id="9799244at2"/>
<dbReference type="Proteomes" id="UP000001349">
    <property type="component" value="Chromosome"/>
</dbReference>
<dbReference type="GO" id="GO:1990904">
    <property type="term" value="C:ribonucleoprotein complex"/>
    <property type="evidence" value="ECO:0007669"/>
    <property type="project" value="UniProtKB-KW"/>
</dbReference>
<dbReference type="GO" id="GO:0005840">
    <property type="term" value="C:ribosome"/>
    <property type="evidence" value="ECO:0007669"/>
    <property type="project" value="UniProtKB-KW"/>
</dbReference>
<dbReference type="GO" id="GO:0003735">
    <property type="term" value="F:structural constituent of ribosome"/>
    <property type="evidence" value="ECO:0007669"/>
    <property type="project" value="InterPro"/>
</dbReference>
<dbReference type="GO" id="GO:0006412">
    <property type="term" value="P:translation"/>
    <property type="evidence" value="ECO:0007669"/>
    <property type="project" value="UniProtKB-UniRule"/>
</dbReference>
<dbReference type="Gene3D" id="1.20.5.1150">
    <property type="entry name" value="Ribosomal protein S8"/>
    <property type="match status" value="1"/>
</dbReference>
<dbReference type="HAMAP" id="MF_00358">
    <property type="entry name" value="Ribosomal_bS21"/>
    <property type="match status" value="1"/>
</dbReference>
<dbReference type="InterPro" id="IPR001911">
    <property type="entry name" value="Ribosomal_bS21"/>
</dbReference>
<dbReference type="InterPro" id="IPR018278">
    <property type="entry name" value="Ribosomal_bS21_CS"/>
</dbReference>
<dbReference type="InterPro" id="IPR038380">
    <property type="entry name" value="Ribosomal_bS21_sf"/>
</dbReference>
<dbReference type="NCBIfam" id="TIGR00030">
    <property type="entry name" value="S21p"/>
    <property type="match status" value="1"/>
</dbReference>
<dbReference type="PANTHER" id="PTHR21109">
    <property type="entry name" value="MITOCHONDRIAL 28S RIBOSOMAL PROTEIN S21"/>
    <property type="match status" value="1"/>
</dbReference>
<dbReference type="PANTHER" id="PTHR21109:SF22">
    <property type="entry name" value="SMALL RIBOSOMAL SUBUNIT PROTEIN BS21"/>
    <property type="match status" value="1"/>
</dbReference>
<dbReference type="Pfam" id="PF01165">
    <property type="entry name" value="Ribosomal_S21"/>
    <property type="match status" value="1"/>
</dbReference>
<dbReference type="PRINTS" id="PR00976">
    <property type="entry name" value="RIBOSOMALS21"/>
</dbReference>
<dbReference type="PROSITE" id="PS01181">
    <property type="entry name" value="RIBOSOMAL_S21"/>
    <property type="match status" value="1"/>
</dbReference>
<sequence length="58" mass="6850">MSEVRVKENESLDSALKRFKRSCAKSGVLAEVRKREHYEKPSVKRKKKSEAARKRKFK</sequence>
<accession>B8I406</accession>